<dbReference type="EC" id="2.7.8.7" evidence="1"/>
<dbReference type="EMBL" id="CP000821">
    <property type="protein sequence ID" value="ABV35763.1"/>
    <property type="molecule type" value="Genomic_DNA"/>
</dbReference>
<dbReference type="RefSeq" id="WP_012141499.1">
    <property type="nucleotide sequence ID" value="NC_009831.1"/>
</dbReference>
<dbReference type="SMR" id="A8FSE0"/>
<dbReference type="STRING" id="425104.Ssed_1152"/>
<dbReference type="KEGG" id="sse:Ssed_1152"/>
<dbReference type="eggNOG" id="COG0736">
    <property type="taxonomic scope" value="Bacteria"/>
</dbReference>
<dbReference type="HOGENOM" id="CLU_089696_3_1_6"/>
<dbReference type="OrthoDB" id="517356at2"/>
<dbReference type="Proteomes" id="UP000002015">
    <property type="component" value="Chromosome"/>
</dbReference>
<dbReference type="GO" id="GO:0005737">
    <property type="term" value="C:cytoplasm"/>
    <property type="evidence" value="ECO:0007669"/>
    <property type="project" value="UniProtKB-SubCell"/>
</dbReference>
<dbReference type="GO" id="GO:0008897">
    <property type="term" value="F:holo-[acyl-carrier-protein] synthase activity"/>
    <property type="evidence" value="ECO:0007669"/>
    <property type="project" value="UniProtKB-UniRule"/>
</dbReference>
<dbReference type="GO" id="GO:0000287">
    <property type="term" value="F:magnesium ion binding"/>
    <property type="evidence" value="ECO:0007669"/>
    <property type="project" value="UniProtKB-UniRule"/>
</dbReference>
<dbReference type="GO" id="GO:0006633">
    <property type="term" value="P:fatty acid biosynthetic process"/>
    <property type="evidence" value="ECO:0007669"/>
    <property type="project" value="UniProtKB-UniRule"/>
</dbReference>
<dbReference type="FunFam" id="3.90.470.20:FF:000001">
    <property type="entry name" value="Holo-[acyl-carrier-protein] synthase"/>
    <property type="match status" value="1"/>
</dbReference>
<dbReference type="Gene3D" id="3.90.470.20">
    <property type="entry name" value="4'-phosphopantetheinyl transferase domain"/>
    <property type="match status" value="1"/>
</dbReference>
<dbReference type="HAMAP" id="MF_00101">
    <property type="entry name" value="AcpS"/>
    <property type="match status" value="1"/>
</dbReference>
<dbReference type="InterPro" id="IPR008278">
    <property type="entry name" value="4-PPantetheinyl_Trfase_dom"/>
</dbReference>
<dbReference type="InterPro" id="IPR037143">
    <property type="entry name" value="4-PPantetheinyl_Trfase_dom_sf"/>
</dbReference>
<dbReference type="InterPro" id="IPR002582">
    <property type="entry name" value="ACPS"/>
</dbReference>
<dbReference type="InterPro" id="IPR004568">
    <property type="entry name" value="Ppantetheine-prot_Trfase_dom"/>
</dbReference>
<dbReference type="NCBIfam" id="TIGR00516">
    <property type="entry name" value="acpS"/>
    <property type="match status" value="1"/>
</dbReference>
<dbReference type="NCBIfam" id="TIGR00556">
    <property type="entry name" value="pantethn_trn"/>
    <property type="match status" value="1"/>
</dbReference>
<dbReference type="Pfam" id="PF01648">
    <property type="entry name" value="ACPS"/>
    <property type="match status" value="1"/>
</dbReference>
<dbReference type="SUPFAM" id="SSF56214">
    <property type="entry name" value="4'-phosphopantetheinyl transferase"/>
    <property type="match status" value="1"/>
</dbReference>
<feature type="chain" id="PRO_1000075663" description="Holo-[acyl-carrier-protein] synthase">
    <location>
        <begin position="1"/>
        <end position="132"/>
    </location>
</feature>
<feature type="binding site" evidence="1">
    <location>
        <position position="8"/>
    </location>
    <ligand>
        <name>Mg(2+)</name>
        <dbReference type="ChEBI" id="CHEBI:18420"/>
    </ligand>
</feature>
<feature type="binding site" evidence="1">
    <location>
        <position position="64"/>
    </location>
    <ligand>
        <name>Mg(2+)</name>
        <dbReference type="ChEBI" id="CHEBI:18420"/>
    </ligand>
</feature>
<protein>
    <recommendedName>
        <fullName evidence="1">Holo-[acyl-carrier-protein] synthase</fullName>
        <shortName evidence="1">Holo-ACP synthase</shortName>
        <ecNumber evidence="1">2.7.8.7</ecNumber>
    </recommendedName>
    <alternativeName>
        <fullName evidence="1">4'-phosphopantetheinyl transferase AcpS</fullName>
    </alternativeName>
</protein>
<proteinExistence type="inferred from homology"/>
<evidence type="ECO:0000255" key="1">
    <source>
        <dbReference type="HAMAP-Rule" id="MF_00101"/>
    </source>
</evidence>
<reference key="1">
    <citation type="submission" date="2007-08" db="EMBL/GenBank/DDBJ databases">
        <title>Complete sequence of Shewanella sediminis HAW-EB3.</title>
        <authorList>
            <consortium name="US DOE Joint Genome Institute"/>
            <person name="Copeland A."/>
            <person name="Lucas S."/>
            <person name="Lapidus A."/>
            <person name="Barry K."/>
            <person name="Glavina del Rio T."/>
            <person name="Dalin E."/>
            <person name="Tice H."/>
            <person name="Pitluck S."/>
            <person name="Chertkov O."/>
            <person name="Brettin T."/>
            <person name="Bruce D."/>
            <person name="Detter J.C."/>
            <person name="Han C."/>
            <person name="Schmutz J."/>
            <person name="Larimer F."/>
            <person name="Land M."/>
            <person name="Hauser L."/>
            <person name="Kyrpides N."/>
            <person name="Kim E."/>
            <person name="Zhao J.-S."/>
            <person name="Richardson P."/>
        </authorList>
    </citation>
    <scope>NUCLEOTIDE SEQUENCE [LARGE SCALE GENOMIC DNA]</scope>
    <source>
        <strain>HAW-EB3</strain>
    </source>
</reference>
<keyword id="KW-0963">Cytoplasm</keyword>
<keyword id="KW-0275">Fatty acid biosynthesis</keyword>
<keyword id="KW-0276">Fatty acid metabolism</keyword>
<keyword id="KW-0444">Lipid biosynthesis</keyword>
<keyword id="KW-0443">Lipid metabolism</keyword>
<keyword id="KW-0460">Magnesium</keyword>
<keyword id="KW-0479">Metal-binding</keyword>
<keyword id="KW-1185">Reference proteome</keyword>
<keyword id="KW-0808">Transferase</keyword>
<comment type="function">
    <text evidence="1">Transfers the 4'-phosphopantetheine moiety from coenzyme A to a Ser of acyl-carrier-protein.</text>
</comment>
<comment type="catalytic activity">
    <reaction evidence="1">
        <text>apo-[ACP] + CoA = holo-[ACP] + adenosine 3',5'-bisphosphate + H(+)</text>
        <dbReference type="Rhea" id="RHEA:12068"/>
        <dbReference type="Rhea" id="RHEA-COMP:9685"/>
        <dbReference type="Rhea" id="RHEA-COMP:9690"/>
        <dbReference type="ChEBI" id="CHEBI:15378"/>
        <dbReference type="ChEBI" id="CHEBI:29999"/>
        <dbReference type="ChEBI" id="CHEBI:57287"/>
        <dbReference type="ChEBI" id="CHEBI:58343"/>
        <dbReference type="ChEBI" id="CHEBI:64479"/>
        <dbReference type="EC" id="2.7.8.7"/>
    </reaction>
</comment>
<comment type="cofactor">
    <cofactor evidence="1">
        <name>Mg(2+)</name>
        <dbReference type="ChEBI" id="CHEBI:18420"/>
    </cofactor>
</comment>
<comment type="subcellular location">
    <subcellularLocation>
        <location evidence="1">Cytoplasm</location>
    </subcellularLocation>
</comment>
<comment type="similarity">
    <text evidence="1">Belongs to the P-Pant transferase superfamily. AcpS family.</text>
</comment>
<name>ACPS_SHESH</name>
<organism>
    <name type="scientific">Shewanella sediminis (strain HAW-EB3)</name>
    <dbReference type="NCBI Taxonomy" id="425104"/>
    <lineage>
        <taxon>Bacteria</taxon>
        <taxon>Pseudomonadati</taxon>
        <taxon>Pseudomonadota</taxon>
        <taxon>Gammaproteobacteria</taxon>
        <taxon>Alteromonadales</taxon>
        <taxon>Shewanellaceae</taxon>
        <taxon>Shewanella</taxon>
    </lineage>
</organism>
<sequence length="132" mass="13941">MIVGLGTDIVEIERIEQKVPQAGDHEALAKCRLAKRVLTESEMAIFVASSKPGRYLAKRFAAKEAAAKALGTGIGRGVSFQHIEISNDANGAPQVNFSGGAAERLALLSGVRGHLSIADEKHYATATVILES</sequence>
<accession>A8FSE0</accession>
<gene>
    <name evidence="1" type="primary">acpS</name>
    <name type="ordered locus">Ssed_1152</name>
</gene>